<proteinExistence type="inferred from homology"/>
<keyword id="KW-0963">Cytoplasm</keyword>
<keyword id="KW-0255">Endonuclease</keyword>
<keyword id="KW-0378">Hydrolase</keyword>
<keyword id="KW-0479">Metal-binding</keyword>
<keyword id="KW-0540">Nuclease</keyword>
<keyword id="KW-0690">Ribosome biogenesis</keyword>
<keyword id="KW-0698">rRNA processing</keyword>
<keyword id="KW-0862">Zinc</keyword>
<reference key="1">
    <citation type="journal article" date="2008" name="PLoS Genet.">
        <title>The genome of Borrelia recurrentis, the agent of deadly louse-borne relapsing fever, is a degraded subset of tick-borne Borrelia duttonii.</title>
        <authorList>
            <person name="Lescot M."/>
            <person name="Audic S."/>
            <person name="Robert C."/>
            <person name="Nguyen T.T."/>
            <person name="Blanc G."/>
            <person name="Cutler S.J."/>
            <person name="Wincker P."/>
            <person name="Couloux A."/>
            <person name="Claverie J.-M."/>
            <person name="Raoult D."/>
            <person name="Drancourt M."/>
        </authorList>
    </citation>
    <scope>NUCLEOTIDE SEQUENCE [LARGE SCALE GENOMIC DNA]</scope>
    <source>
        <strain>A1</strain>
    </source>
</reference>
<accession>B5RQN9</accession>
<comment type="function">
    <text evidence="1">Single strand-specific metallo-endoribonuclease involved in late-stage 70S ribosome quality control and in maturation of the 3' terminus of the 16S rRNA.</text>
</comment>
<comment type="cofactor">
    <cofactor evidence="1">
        <name>Zn(2+)</name>
        <dbReference type="ChEBI" id="CHEBI:29105"/>
    </cofactor>
    <text evidence="1">Binds 1 zinc ion.</text>
</comment>
<comment type="subcellular location">
    <subcellularLocation>
        <location evidence="1">Cytoplasm</location>
    </subcellularLocation>
</comment>
<comment type="similarity">
    <text evidence="1">Belongs to the endoribonuclease YbeY family.</text>
</comment>
<protein>
    <recommendedName>
        <fullName evidence="1">Endoribonuclease YbeY</fullName>
        <ecNumber evidence="1">3.1.-.-</ecNumber>
    </recommendedName>
</protein>
<gene>
    <name evidence="1" type="primary">ybeY</name>
    <name type="ordered locus">BRE_63</name>
</gene>
<organism>
    <name type="scientific">Borrelia recurrentis (strain A1)</name>
    <dbReference type="NCBI Taxonomy" id="412418"/>
    <lineage>
        <taxon>Bacteria</taxon>
        <taxon>Pseudomonadati</taxon>
        <taxon>Spirochaetota</taxon>
        <taxon>Spirochaetia</taxon>
        <taxon>Spirochaetales</taxon>
        <taxon>Borreliaceae</taxon>
        <taxon>Borrelia</taxon>
    </lineage>
</organism>
<name>YBEY_BORRA</name>
<evidence type="ECO:0000255" key="1">
    <source>
        <dbReference type="HAMAP-Rule" id="MF_00009"/>
    </source>
</evidence>
<sequence>MIKEELNLWAEGVEFRHLDAYYNFILSVLNFLCIKEYELSVILCNNEYIQKLNGEFRQKPEPTDVLSFNYFEGSEQINHKIQGDIVISLEYLEFSSLEFNVEMYEELQRNTIHGILHLIGYTHDTNDFQNETMLIIQERVLRETRRVF</sequence>
<dbReference type="EC" id="3.1.-.-" evidence="1"/>
<dbReference type="EMBL" id="CP000993">
    <property type="protein sequence ID" value="ACH94323.1"/>
    <property type="molecule type" value="Genomic_DNA"/>
</dbReference>
<dbReference type="RefSeq" id="WP_012538628.1">
    <property type="nucleotide sequence ID" value="NC_011244.1"/>
</dbReference>
<dbReference type="SMR" id="B5RQN9"/>
<dbReference type="KEGG" id="bre:BRE_63"/>
<dbReference type="HOGENOM" id="CLU_106710_3_3_12"/>
<dbReference type="Proteomes" id="UP000000612">
    <property type="component" value="Chromosome"/>
</dbReference>
<dbReference type="GO" id="GO:0005737">
    <property type="term" value="C:cytoplasm"/>
    <property type="evidence" value="ECO:0007669"/>
    <property type="project" value="UniProtKB-SubCell"/>
</dbReference>
<dbReference type="GO" id="GO:0004222">
    <property type="term" value="F:metalloendopeptidase activity"/>
    <property type="evidence" value="ECO:0007669"/>
    <property type="project" value="InterPro"/>
</dbReference>
<dbReference type="GO" id="GO:0004521">
    <property type="term" value="F:RNA endonuclease activity"/>
    <property type="evidence" value="ECO:0007669"/>
    <property type="project" value="UniProtKB-UniRule"/>
</dbReference>
<dbReference type="GO" id="GO:0008270">
    <property type="term" value="F:zinc ion binding"/>
    <property type="evidence" value="ECO:0007669"/>
    <property type="project" value="UniProtKB-UniRule"/>
</dbReference>
<dbReference type="GO" id="GO:0006364">
    <property type="term" value="P:rRNA processing"/>
    <property type="evidence" value="ECO:0007669"/>
    <property type="project" value="UniProtKB-UniRule"/>
</dbReference>
<dbReference type="Gene3D" id="3.40.390.30">
    <property type="entry name" value="Metalloproteases ('zincins'), catalytic domain"/>
    <property type="match status" value="1"/>
</dbReference>
<dbReference type="HAMAP" id="MF_00009">
    <property type="entry name" value="Endoribonucl_YbeY"/>
    <property type="match status" value="1"/>
</dbReference>
<dbReference type="InterPro" id="IPR023091">
    <property type="entry name" value="MetalPrtase_cat_dom_sf_prd"/>
</dbReference>
<dbReference type="InterPro" id="IPR002036">
    <property type="entry name" value="YbeY"/>
</dbReference>
<dbReference type="InterPro" id="IPR020549">
    <property type="entry name" value="YbeY_CS"/>
</dbReference>
<dbReference type="NCBIfam" id="TIGR00043">
    <property type="entry name" value="rRNA maturation RNase YbeY"/>
    <property type="match status" value="1"/>
</dbReference>
<dbReference type="PANTHER" id="PTHR46986">
    <property type="entry name" value="ENDORIBONUCLEASE YBEY, CHLOROPLASTIC"/>
    <property type="match status" value="1"/>
</dbReference>
<dbReference type="PANTHER" id="PTHR46986:SF1">
    <property type="entry name" value="ENDORIBONUCLEASE YBEY, CHLOROPLASTIC"/>
    <property type="match status" value="1"/>
</dbReference>
<dbReference type="Pfam" id="PF02130">
    <property type="entry name" value="YbeY"/>
    <property type="match status" value="1"/>
</dbReference>
<dbReference type="SUPFAM" id="SSF55486">
    <property type="entry name" value="Metalloproteases ('zincins'), catalytic domain"/>
    <property type="match status" value="1"/>
</dbReference>
<dbReference type="PROSITE" id="PS01306">
    <property type="entry name" value="UPF0054"/>
    <property type="match status" value="1"/>
</dbReference>
<feature type="chain" id="PRO_1000089156" description="Endoribonuclease YbeY">
    <location>
        <begin position="1"/>
        <end position="148"/>
    </location>
</feature>
<feature type="binding site" evidence="1">
    <location>
        <position position="113"/>
    </location>
    <ligand>
        <name>Zn(2+)</name>
        <dbReference type="ChEBI" id="CHEBI:29105"/>
        <note>catalytic</note>
    </ligand>
</feature>
<feature type="binding site" evidence="1">
    <location>
        <position position="117"/>
    </location>
    <ligand>
        <name>Zn(2+)</name>
        <dbReference type="ChEBI" id="CHEBI:29105"/>
        <note>catalytic</note>
    </ligand>
</feature>
<feature type="binding site" evidence="1">
    <location>
        <position position="123"/>
    </location>
    <ligand>
        <name>Zn(2+)</name>
        <dbReference type="ChEBI" id="CHEBI:29105"/>
        <note>catalytic</note>
    </ligand>
</feature>